<dbReference type="EMBL" id="AP008215">
    <property type="protein sequence ID" value="BAF25516.1"/>
    <property type="status" value="ALT_SEQ"/>
    <property type="molecule type" value="Genomic_DNA"/>
</dbReference>
<dbReference type="EMBL" id="AP014965">
    <property type="protein sequence ID" value="BAT08851.1"/>
    <property type="status" value="ALT_SEQ"/>
    <property type="molecule type" value="Genomic_DNA"/>
</dbReference>
<dbReference type="EMBL" id="BR000835">
    <property type="protein sequence ID" value="FAA00684.1"/>
    <property type="molecule type" value="Genomic_DNA"/>
</dbReference>
<dbReference type="RefSeq" id="XP_015611661.1">
    <property type="nucleotide sequence ID" value="XM_015756175.1"/>
</dbReference>
<dbReference type="SMR" id="D5A7J3"/>
<dbReference type="FunCoup" id="D5A7J3">
    <property type="interactions" value="12"/>
</dbReference>
<dbReference type="STRING" id="39947.D5A7J3"/>
<dbReference type="PaxDb" id="39947-D5A7J3"/>
<dbReference type="KEGG" id="dosa:Os09g0505400"/>
<dbReference type="InParanoid" id="D5A7J3"/>
<dbReference type="OrthoDB" id="2133778at2759"/>
<dbReference type="PlantReactome" id="R-OSA-8858053">
    <property type="pathway name" value="Polar auxin transport"/>
</dbReference>
<dbReference type="Proteomes" id="UP000000763">
    <property type="component" value="Chromosome 9"/>
</dbReference>
<dbReference type="Proteomes" id="UP000059680">
    <property type="component" value="Chromosome 9"/>
</dbReference>
<dbReference type="GO" id="GO:0071944">
    <property type="term" value="C:cell periphery"/>
    <property type="evidence" value="ECO:0000250"/>
    <property type="project" value="UniProtKB"/>
</dbReference>
<dbReference type="GO" id="GO:0005783">
    <property type="term" value="C:endoplasmic reticulum"/>
    <property type="evidence" value="ECO:0000318"/>
    <property type="project" value="GO_Central"/>
</dbReference>
<dbReference type="GO" id="GO:0005886">
    <property type="term" value="C:plasma membrane"/>
    <property type="evidence" value="ECO:0000250"/>
    <property type="project" value="UniProtKB"/>
</dbReference>
<dbReference type="GO" id="GO:0010329">
    <property type="term" value="F:auxin efflux transmembrane transporter activity"/>
    <property type="evidence" value="ECO:0000250"/>
    <property type="project" value="UniProtKB"/>
</dbReference>
<dbReference type="GO" id="GO:0042802">
    <property type="term" value="F:identical protein binding"/>
    <property type="evidence" value="ECO:0000250"/>
    <property type="project" value="UniProtKB"/>
</dbReference>
<dbReference type="GO" id="GO:0042803">
    <property type="term" value="F:protein homodimerization activity"/>
    <property type="evidence" value="ECO:0000250"/>
    <property type="project" value="UniProtKB"/>
</dbReference>
<dbReference type="GO" id="GO:0010315">
    <property type="term" value="P:auxin export across the plasma membrane"/>
    <property type="evidence" value="ECO:0000250"/>
    <property type="project" value="UniProtKB"/>
</dbReference>
<dbReference type="GO" id="GO:0009926">
    <property type="term" value="P:auxin polar transport"/>
    <property type="evidence" value="ECO:0000318"/>
    <property type="project" value="GO_Central"/>
</dbReference>
<dbReference type="GO" id="GO:0009734">
    <property type="term" value="P:auxin-activated signaling pathway"/>
    <property type="evidence" value="ECO:0007669"/>
    <property type="project" value="UniProtKB-KW"/>
</dbReference>
<dbReference type="InterPro" id="IPR014024">
    <property type="entry name" value="Auxin_eff_plant"/>
</dbReference>
<dbReference type="InterPro" id="IPR051107">
    <property type="entry name" value="Auxin_Efflux_Carrier"/>
</dbReference>
<dbReference type="InterPro" id="IPR004776">
    <property type="entry name" value="Mem_transp_PIN-like"/>
</dbReference>
<dbReference type="NCBIfam" id="TIGR00946">
    <property type="entry name" value="2a69"/>
    <property type="match status" value="1"/>
</dbReference>
<dbReference type="PANTHER" id="PTHR31752">
    <property type="entry name" value="AUXIN EFFLUX CARRIER COMPONENT 1B-RELATED"/>
    <property type="match status" value="1"/>
</dbReference>
<dbReference type="PANTHER" id="PTHR31752:SF15">
    <property type="entry name" value="AUXIN EFFLUX CARRIER COMPONENT 5B-RELATED"/>
    <property type="match status" value="1"/>
</dbReference>
<dbReference type="Pfam" id="PF03547">
    <property type="entry name" value="Mem_trans"/>
    <property type="match status" value="1"/>
</dbReference>
<sequence length="368" mass="38694">MIGWGDVYKVVAAMAPLYFALGLGYGSVRWWRLFTADQCDAVNRLVACFAVPFFAFDFAARIDPFALSYRVLAADALSKLAVALALAACAAAASTRCCGSGGGKRGGGGGFSWCITGFSLATLNNTLVVGVPLLDAMYGKWARDLIVQISVVQTIVYFPLLLLAFEVRRATTAAAAPPPPPTGTDDDDVEDGAAAAATAAAARRSLWPLVRAVWLKVARNPNVYAGVLGVAWACVTNRWHVETPSIIEGSVLIMSKTGVGLSMFSMGLFMALQDKIIVCGAGLTVLGMALRFVAGPAATAVGAFALGLRGDLLRLAIIQAALPQSITTFVFAKEYGLHAEILSTAVIFGTLASLPVLIVYYIVLGFIR</sequence>
<evidence type="ECO:0000255" key="1"/>
<evidence type="ECO:0000269" key="2">
    <source ref="4"/>
</evidence>
<evidence type="ECO:0000303" key="3">
    <source ref="4"/>
</evidence>
<evidence type="ECO:0000305" key="4"/>
<evidence type="ECO:0000312" key="5">
    <source>
        <dbReference type="EMBL" id="BAF25516.1"/>
    </source>
</evidence>
<name>PIN5B_ORYSJ</name>
<protein>
    <recommendedName>
        <fullName evidence="4">Probable auxin efflux carrier component 5b</fullName>
        <shortName evidence="3">OsPIN5b</shortName>
    </recommendedName>
    <alternativeName>
        <fullName evidence="4">OsPIN5c</fullName>
    </alternativeName>
</protein>
<comment type="function">
    <text evidence="4">May act as a component of the auxin efflux carrier.</text>
</comment>
<comment type="subcellular location">
    <subcellularLocation>
        <location evidence="1">Membrane</location>
        <topology evidence="1">Multi-pass membrane protein</topology>
    </subcellularLocation>
</comment>
<comment type="tissue specificity">
    <text evidence="2">Expressed at low levels in roots and shoot apex.</text>
</comment>
<comment type="similarity">
    <text evidence="4">Belongs to the auxin efflux carrier (TC 2.A.69.1) family.</text>
</comment>
<comment type="sequence caution" evidence="4">
    <conflict type="erroneous gene model prediction">
        <sequence resource="EMBL-CDS" id="BAF25516"/>
    </conflict>
</comment>
<comment type="sequence caution" evidence="4">
    <conflict type="erroneous gene model prediction">
        <sequence resource="EMBL-CDS" id="BAT08851"/>
    </conflict>
</comment>
<organism>
    <name type="scientific">Oryza sativa subsp. japonica</name>
    <name type="common">Rice</name>
    <dbReference type="NCBI Taxonomy" id="39947"/>
    <lineage>
        <taxon>Eukaryota</taxon>
        <taxon>Viridiplantae</taxon>
        <taxon>Streptophyta</taxon>
        <taxon>Embryophyta</taxon>
        <taxon>Tracheophyta</taxon>
        <taxon>Spermatophyta</taxon>
        <taxon>Magnoliopsida</taxon>
        <taxon>Liliopsida</taxon>
        <taxon>Poales</taxon>
        <taxon>Poaceae</taxon>
        <taxon>BOP clade</taxon>
        <taxon>Oryzoideae</taxon>
        <taxon>Oryzeae</taxon>
        <taxon>Oryzinae</taxon>
        <taxon>Oryza</taxon>
        <taxon>Oryza sativa</taxon>
    </lineage>
</organism>
<feature type="chain" id="PRO_0000437477" description="Probable auxin efflux carrier component 5b">
    <location>
        <begin position="1"/>
        <end position="368"/>
    </location>
</feature>
<feature type="transmembrane region" description="Helical" evidence="1">
    <location>
        <begin position="7"/>
        <end position="27"/>
    </location>
</feature>
<feature type="transmembrane region" description="Helical" evidence="1">
    <location>
        <begin position="39"/>
        <end position="59"/>
    </location>
</feature>
<feature type="transmembrane region" description="Helical" evidence="1">
    <location>
        <begin position="71"/>
        <end position="91"/>
    </location>
</feature>
<feature type="transmembrane region" description="Helical" evidence="1">
    <location>
        <begin position="114"/>
        <end position="134"/>
    </location>
</feature>
<feature type="transmembrane region" description="Helical" evidence="1">
    <location>
        <begin position="145"/>
        <end position="165"/>
    </location>
</feature>
<feature type="transmembrane region" description="Helical" evidence="1">
    <location>
        <begin position="227"/>
        <end position="247"/>
    </location>
</feature>
<feature type="transmembrane region" description="Helical" evidence="1">
    <location>
        <begin position="251"/>
        <end position="271"/>
    </location>
</feature>
<feature type="transmembrane region" description="Helical" evidence="1">
    <location>
        <begin position="286"/>
        <end position="306"/>
    </location>
</feature>
<feature type="transmembrane region" description="Helical" evidence="1">
    <location>
        <begin position="312"/>
        <end position="332"/>
    </location>
</feature>
<feature type="transmembrane region" description="Helical" evidence="1">
    <location>
        <begin position="347"/>
        <end position="367"/>
    </location>
</feature>
<gene>
    <name evidence="3" type="primary">PIN5B</name>
    <name evidence="5" type="ordered locus">Os09g0505400</name>
    <name evidence="4" type="ordered locus">LOC_Os09g32770</name>
</gene>
<proteinExistence type="evidence at transcript level"/>
<accession>D5A7J3</accession>
<accession>A0A0P0XPK3</accession>
<accession>Q0J0M0</accession>
<keyword id="KW-0927">Auxin signaling pathway</keyword>
<keyword id="KW-0472">Membrane</keyword>
<keyword id="KW-1185">Reference proteome</keyword>
<keyword id="KW-0812">Transmembrane</keyword>
<keyword id="KW-1133">Transmembrane helix</keyword>
<keyword id="KW-0813">Transport</keyword>
<reference key="1">
    <citation type="journal article" date="2005" name="Nature">
        <title>The map-based sequence of the rice genome.</title>
        <authorList>
            <consortium name="International rice genome sequencing project (IRGSP)"/>
        </authorList>
    </citation>
    <scope>NUCLEOTIDE SEQUENCE [LARGE SCALE GENOMIC DNA]</scope>
    <source>
        <strain>cv. Nipponbare</strain>
    </source>
</reference>
<reference key="2">
    <citation type="journal article" date="2008" name="Nucleic Acids Res.">
        <title>The rice annotation project database (RAP-DB): 2008 update.</title>
        <authorList>
            <consortium name="The rice annotation project (RAP)"/>
        </authorList>
    </citation>
    <scope>GENOME REANNOTATION</scope>
    <source>
        <strain>cv. Nipponbare</strain>
    </source>
</reference>
<reference key="3">
    <citation type="journal article" date="2013" name="Rice">
        <title>Improvement of the Oryza sativa Nipponbare reference genome using next generation sequence and optical map data.</title>
        <authorList>
            <person name="Kawahara Y."/>
            <person name="de la Bastide M."/>
            <person name="Hamilton J.P."/>
            <person name="Kanamori H."/>
            <person name="McCombie W.R."/>
            <person name="Ouyang S."/>
            <person name="Schwartz D.C."/>
            <person name="Tanaka T."/>
            <person name="Wu J."/>
            <person name="Zhou S."/>
            <person name="Childs K.L."/>
            <person name="Davidson R.M."/>
            <person name="Lin H."/>
            <person name="Quesada-Ocampo L."/>
            <person name="Vaillancourt B."/>
            <person name="Sakai H."/>
            <person name="Lee S.S."/>
            <person name="Kim J."/>
            <person name="Numa H."/>
            <person name="Itoh T."/>
            <person name="Buell C.R."/>
            <person name="Matsumoto T."/>
        </authorList>
    </citation>
    <scope>GENOME REANNOTATION</scope>
    <source>
        <strain>cv. Nipponbare</strain>
    </source>
</reference>
<reference key="4">
    <citation type="journal article" date="2010" name="Plant Sci.">
        <title>Identification and expression analysis of PIN genes in rice.</title>
        <authorList>
            <person name="Miyashita Y."/>
            <person name="Takasugi T."/>
            <person name="Ito Y."/>
        </authorList>
    </citation>
    <scope>IDENTIFICATION</scope>
    <scope>TISSUE SPECIFICITY</scope>
</reference>